<comment type="function">
    <text evidence="1">Catalyzes the conversion of dihydroorotate to orotate with NAD(+) as electron acceptor.</text>
</comment>
<comment type="catalytic activity">
    <reaction>
        <text>(S)-dihydroorotate + NAD(+) = orotate + NADH + H(+)</text>
        <dbReference type="Rhea" id="RHEA:13513"/>
        <dbReference type="ChEBI" id="CHEBI:15378"/>
        <dbReference type="ChEBI" id="CHEBI:30839"/>
        <dbReference type="ChEBI" id="CHEBI:30864"/>
        <dbReference type="ChEBI" id="CHEBI:57540"/>
        <dbReference type="ChEBI" id="CHEBI:57945"/>
        <dbReference type="EC" id="1.3.1.14"/>
    </reaction>
</comment>
<comment type="cofactor">
    <cofactor evidence="1">
        <name>FMN</name>
        <dbReference type="ChEBI" id="CHEBI:58210"/>
    </cofactor>
    <text evidence="1">Binds 1 FMN per subunit.</text>
</comment>
<comment type="pathway">
    <text>Pyrimidine metabolism; UMP biosynthesis via de novo pathway; orotate from (S)-dihydroorotate (NAD(+) route): step 1/1.</text>
</comment>
<comment type="subunit">
    <text evidence="1">Heterotetramer of 2 PyrK and 2 PyrD type B subunits.</text>
</comment>
<comment type="subcellular location">
    <subcellularLocation>
        <location evidence="1">Cytoplasm</location>
    </subcellularLocation>
</comment>
<comment type="similarity">
    <text evidence="2">Belongs to the dihydroorotate dehydrogenase family. Type 1 subfamily.</text>
</comment>
<sequence length="309" mass="32893">MNRLQVELPGLSLKNPIIPASGCFGFGREYAQFYDLSVLGSIMIKATTEQPRYGNPTPRVAETPGGMLNAIGLQNPGLEKVMNSELPFLEQFDLPIIANVAGSQAEDYVAVAKAISKAPNVHALELNISCPNVKTGGIAFGTNPEIAADLTKRVKEVSEVPVYVKLSPNVANIVEIAKAIENAGADGLTMINTLLGMRLDLKTAKPILANRTGGLSGPAIKPVALRMVHEVSQAVNIPIIGMGGIETAEDVIEFFYAGASAVAVGTANFIDPFVCPTIIEELPALLDELGFDHISECQGRSWKQTCHSR</sequence>
<name>PYRDB_BACMK</name>
<dbReference type="EC" id="1.3.1.14"/>
<dbReference type="EMBL" id="CP000903">
    <property type="protein sequence ID" value="ABY44880.1"/>
    <property type="molecule type" value="Genomic_DNA"/>
</dbReference>
<dbReference type="RefSeq" id="WP_012261601.1">
    <property type="nucleotide sequence ID" value="NC_010184.1"/>
</dbReference>
<dbReference type="SMR" id="A9VTC4"/>
<dbReference type="KEGG" id="bwe:BcerKBAB4_3711"/>
<dbReference type="eggNOG" id="COG0167">
    <property type="taxonomic scope" value="Bacteria"/>
</dbReference>
<dbReference type="HOGENOM" id="CLU_042042_0_0_9"/>
<dbReference type="UniPathway" id="UPA00070">
    <property type="reaction ID" value="UER00945"/>
</dbReference>
<dbReference type="Proteomes" id="UP000002154">
    <property type="component" value="Chromosome"/>
</dbReference>
<dbReference type="GO" id="GO:0005737">
    <property type="term" value="C:cytoplasm"/>
    <property type="evidence" value="ECO:0007669"/>
    <property type="project" value="UniProtKB-SubCell"/>
</dbReference>
<dbReference type="GO" id="GO:0004589">
    <property type="term" value="F:dihydroorotate dehydrogenase (NAD+) activity"/>
    <property type="evidence" value="ECO:0007669"/>
    <property type="project" value="UniProtKB-EC"/>
</dbReference>
<dbReference type="GO" id="GO:0006207">
    <property type="term" value="P:'de novo' pyrimidine nucleobase biosynthetic process"/>
    <property type="evidence" value="ECO:0007669"/>
    <property type="project" value="InterPro"/>
</dbReference>
<dbReference type="GO" id="GO:0044205">
    <property type="term" value="P:'de novo' UMP biosynthetic process"/>
    <property type="evidence" value="ECO:0007669"/>
    <property type="project" value="UniProtKB-UniRule"/>
</dbReference>
<dbReference type="CDD" id="cd04740">
    <property type="entry name" value="DHOD_1B_like"/>
    <property type="match status" value="1"/>
</dbReference>
<dbReference type="FunFam" id="3.20.20.70:FF:000069">
    <property type="entry name" value="Dihydroorotate dehydrogenase"/>
    <property type="match status" value="1"/>
</dbReference>
<dbReference type="Gene3D" id="3.20.20.70">
    <property type="entry name" value="Aldolase class I"/>
    <property type="match status" value="1"/>
</dbReference>
<dbReference type="HAMAP" id="MF_00224">
    <property type="entry name" value="DHO_dh_type1"/>
    <property type="match status" value="1"/>
</dbReference>
<dbReference type="InterPro" id="IPR013785">
    <property type="entry name" value="Aldolase_TIM"/>
</dbReference>
<dbReference type="InterPro" id="IPR050074">
    <property type="entry name" value="DHO_dehydrogenase"/>
</dbReference>
<dbReference type="InterPro" id="IPR033888">
    <property type="entry name" value="DHOD_1B"/>
</dbReference>
<dbReference type="InterPro" id="IPR024920">
    <property type="entry name" value="Dihydroorotate_DH_1"/>
</dbReference>
<dbReference type="InterPro" id="IPR012135">
    <property type="entry name" value="Dihydroorotate_DH_1_2"/>
</dbReference>
<dbReference type="InterPro" id="IPR005720">
    <property type="entry name" value="Dihydroorotate_DH_cat"/>
</dbReference>
<dbReference type="InterPro" id="IPR001295">
    <property type="entry name" value="Dihydroorotate_DH_CS"/>
</dbReference>
<dbReference type="InterPro" id="IPR049622">
    <property type="entry name" value="Dihydroorotate_DH_I"/>
</dbReference>
<dbReference type="NCBIfam" id="NF005574">
    <property type="entry name" value="PRK07259.1"/>
    <property type="match status" value="1"/>
</dbReference>
<dbReference type="NCBIfam" id="TIGR01037">
    <property type="entry name" value="pyrD_sub1_fam"/>
    <property type="match status" value="1"/>
</dbReference>
<dbReference type="PANTHER" id="PTHR48109:SF1">
    <property type="entry name" value="DIHYDROOROTATE DEHYDROGENASE (FUMARATE)"/>
    <property type="match status" value="1"/>
</dbReference>
<dbReference type="PANTHER" id="PTHR48109">
    <property type="entry name" value="DIHYDROOROTATE DEHYDROGENASE (QUINONE), MITOCHONDRIAL-RELATED"/>
    <property type="match status" value="1"/>
</dbReference>
<dbReference type="Pfam" id="PF01180">
    <property type="entry name" value="DHO_dh"/>
    <property type="match status" value="1"/>
</dbReference>
<dbReference type="PIRSF" id="PIRSF000164">
    <property type="entry name" value="DHO_oxidase"/>
    <property type="match status" value="1"/>
</dbReference>
<dbReference type="SUPFAM" id="SSF51395">
    <property type="entry name" value="FMN-linked oxidoreductases"/>
    <property type="match status" value="1"/>
</dbReference>
<dbReference type="PROSITE" id="PS00911">
    <property type="entry name" value="DHODEHASE_1"/>
    <property type="match status" value="1"/>
</dbReference>
<dbReference type="PROSITE" id="PS00912">
    <property type="entry name" value="DHODEHASE_2"/>
    <property type="match status" value="1"/>
</dbReference>
<accession>A9VTC4</accession>
<feature type="chain" id="PRO_1000100217" description="Dihydroorotate dehydrogenase B (NAD(+)), catalytic subunit">
    <location>
        <begin position="1"/>
        <end position="309"/>
    </location>
</feature>
<feature type="active site" description="Nucleophile">
    <location>
        <position position="130"/>
    </location>
</feature>
<feature type="binding site" evidence="1">
    <location>
        <position position="21"/>
    </location>
    <ligand>
        <name>FMN</name>
        <dbReference type="ChEBI" id="CHEBI:58210"/>
    </ligand>
</feature>
<feature type="binding site" evidence="1">
    <location>
        <begin position="45"/>
        <end position="46"/>
    </location>
    <ligand>
        <name>FMN</name>
        <dbReference type="ChEBI" id="CHEBI:58210"/>
    </ligand>
</feature>
<feature type="binding site" evidence="1">
    <location>
        <position position="45"/>
    </location>
    <ligand>
        <name>substrate</name>
    </ligand>
</feature>
<feature type="binding site" evidence="1">
    <location>
        <begin position="69"/>
        <end position="73"/>
    </location>
    <ligand>
        <name>substrate</name>
    </ligand>
</feature>
<feature type="binding site" evidence="1">
    <location>
        <position position="99"/>
    </location>
    <ligand>
        <name>FMN</name>
        <dbReference type="ChEBI" id="CHEBI:58210"/>
    </ligand>
</feature>
<feature type="binding site" evidence="1">
    <location>
        <position position="127"/>
    </location>
    <ligand>
        <name>FMN</name>
        <dbReference type="ChEBI" id="CHEBI:58210"/>
    </ligand>
</feature>
<feature type="binding site" evidence="1">
    <location>
        <position position="127"/>
    </location>
    <ligand>
        <name>substrate</name>
    </ligand>
</feature>
<feature type="binding site" evidence="1">
    <location>
        <position position="165"/>
    </location>
    <ligand>
        <name>FMN</name>
        <dbReference type="ChEBI" id="CHEBI:58210"/>
    </ligand>
</feature>
<feature type="binding site" evidence="1">
    <location>
        <position position="191"/>
    </location>
    <ligand>
        <name>FMN</name>
        <dbReference type="ChEBI" id="CHEBI:58210"/>
    </ligand>
</feature>
<feature type="binding site" evidence="1">
    <location>
        <begin position="192"/>
        <end position="193"/>
    </location>
    <ligand>
        <name>substrate</name>
    </ligand>
</feature>
<feature type="binding site" evidence="1">
    <location>
        <position position="217"/>
    </location>
    <ligand>
        <name>FMN</name>
        <dbReference type="ChEBI" id="CHEBI:58210"/>
    </ligand>
</feature>
<feature type="binding site" evidence="1">
    <location>
        <begin position="243"/>
        <end position="244"/>
    </location>
    <ligand>
        <name>FMN</name>
        <dbReference type="ChEBI" id="CHEBI:58210"/>
    </ligand>
</feature>
<feature type="binding site" evidence="1">
    <location>
        <begin position="265"/>
        <end position="266"/>
    </location>
    <ligand>
        <name>FMN</name>
        <dbReference type="ChEBI" id="CHEBI:58210"/>
    </ligand>
</feature>
<protein>
    <recommendedName>
        <fullName>Dihydroorotate dehydrogenase B (NAD(+)), catalytic subunit</fullName>
        <shortName>DHOD B</shortName>
        <shortName>DHODase B</shortName>
        <shortName>DHOdehase B</shortName>
        <ecNumber>1.3.1.14</ecNumber>
    </recommendedName>
    <alternativeName>
        <fullName>Dihydroorotate oxidase B</fullName>
    </alternativeName>
    <alternativeName>
        <fullName>Orotate reductase (NADH)</fullName>
    </alternativeName>
</protein>
<gene>
    <name type="primary">pyrD</name>
    <name type="ordered locus">BcerKBAB4_3711</name>
</gene>
<keyword id="KW-0963">Cytoplasm</keyword>
<keyword id="KW-0285">Flavoprotein</keyword>
<keyword id="KW-0288">FMN</keyword>
<keyword id="KW-0520">NAD</keyword>
<keyword id="KW-0560">Oxidoreductase</keyword>
<keyword id="KW-0665">Pyrimidine biosynthesis</keyword>
<proteinExistence type="inferred from homology"/>
<reference key="1">
    <citation type="journal article" date="2008" name="Chem. Biol. Interact.">
        <title>Extending the Bacillus cereus group genomics to putative food-borne pathogens of different toxicity.</title>
        <authorList>
            <person name="Lapidus A."/>
            <person name="Goltsman E."/>
            <person name="Auger S."/>
            <person name="Galleron N."/>
            <person name="Segurens B."/>
            <person name="Dossat C."/>
            <person name="Land M.L."/>
            <person name="Broussolle V."/>
            <person name="Brillard J."/>
            <person name="Guinebretiere M.-H."/>
            <person name="Sanchis V."/>
            <person name="Nguen-the C."/>
            <person name="Lereclus D."/>
            <person name="Richardson P."/>
            <person name="Wincker P."/>
            <person name="Weissenbach J."/>
            <person name="Ehrlich S.D."/>
            <person name="Sorokin A."/>
        </authorList>
    </citation>
    <scope>NUCLEOTIDE SEQUENCE [LARGE SCALE GENOMIC DNA]</scope>
    <source>
        <strain>KBAB4</strain>
    </source>
</reference>
<organism>
    <name type="scientific">Bacillus mycoides (strain KBAB4)</name>
    <name type="common">Bacillus weihenstephanensis</name>
    <dbReference type="NCBI Taxonomy" id="315730"/>
    <lineage>
        <taxon>Bacteria</taxon>
        <taxon>Bacillati</taxon>
        <taxon>Bacillota</taxon>
        <taxon>Bacilli</taxon>
        <taxon>Bacillales</taxon>
        <taxon>Bacillaceae</taxon>
        <taxon>Bacillus</taxon>
        <taxon>Bacillus cereus group</taxon>
    </lineage>
</organism>
<evidence type="ECO:0000250" key="1"/>
<evidence type="ECO:0000305" key="2"/>